<name>TRUA_ROSCS</name>
<comment type="function">
    <text evidence="1">Formation of pseudouridine at positions 38, 39 and 40 in the anticodon stem and loop of transfer RNAs.</text>
</comment>
<comment type="catalytic activity">
    <reaction evidence="1">
        <text>uridine(38/39/40) in tRNA = pseudouridine(38/39/40) in tRNA</text>
        <dbReference type="Rhea" id="RHEA:22376"/>
        <dbReference type="Rhea" id="RHEA-COMP:10085"/>
        <dbReference type="Rhea" id="RHEA-COMP:10087"/>
        <dbReference type="ChEBI" id="CHEBI:65314"/>
        <dbReference type="ChEBI" id="CHEBI:65315"/>
        <dbReference type="EC" id="5.4.99.12"/>
    </reaction>
</comment>
<comment type="subunit">
    <text evidence="1">Homodimer.</text>
</comment>
<comment type="similarity">
    <text evidence="1">Belongs to the tRNA pseudouridine synthase TruA family.</text>
</comment>
<evidence type="ECO:0000255" key="1">
    <source>
        <dbReference type="HAMAP-Rule" id="MF_00171"/>
    </source>
</evidence>
<gene>
    <name evidence="1" type="primary">truA</name>
    <name type="ordered locus">Rcas_3997</name>
</gene>
<accession>A7NR34</accession>
<protein>
    <recommendedName>
        <fullName evidence="1">tRNA pseudouridine synthase A</fullName>
        <ecNumber evidence="1">5.4.99.12</ecNumber>
    </recommendedName>
    <alternativeName>
        <fullName evidence="1">tRNA pseudouridine(38-40) synthase</fullName>
    </alternativeName>
    <alternativeName>
        <fullName evidence="1">tRNA pseudouridylate synthase I</fullName>
    </alternativeName>
    <alternativeName>
        <fullName evidence="1">tRNA-uridine isomerase I</fullName>
    </alternativeName>
</protein>
<keyword id="KW-0413">Isomerase</keyword>
<keyword id="KW-1185">Reference proteome</keyword>
<keyword id="KW-0819">tRNA processing</keyword>
<reference key="1">
    <citation type="submission" date="2007-08" db="EMBL/GenBank/DDBJ databases">
        <title>Complete sequence of Roseiflexus castenholzii DSM 13941.</title>
        <authorList>
            <consortium name="US DOE Joint Genome Institute"/>
            <person name="Copeland A."/>
            <person name="Lucas S."/>
            <person name="Lapidus A."/>
            <person name="Barry K."/>
            <person name="Glavina del Rio T."/>
            <person name="Dalin E."/>
            <person name="Tice H."/>
            <person name="Pitluck S."/>
            <person name="Thompson L.S."/>
            <person name="Brettin T."/>
            <person name="Bruce D."/>
            <person name="Detter J.C."/>
            <person name="Han C."/>
            <person name="Tapia R."/>
            <person name="Schmutz J."/>
            <person name="Larimer F."/>
            <person name="Land M."/>
            <person name="Hauser L."/>
            <person name="Kyrpides N."/>
            <person name="Mikhailova N."/>
            <person name="Bryant D.A."/>
            <person name="Hanada S."/>
            <person name="Tsukatani Y."/>
            <person name="Richardson P."/>
        </authorList>
    </citation>
    <scope>NUCLEOTIDE SEQUENCE [LARGE SCALE GENOMIC DNA]</scope>
    <source>
        <strain>DSM 13941 / HLO8</strain>
    </source>
</reference>
<dbReference type="EC" id="5.4.99.12" evidence="1"/>
<dbReference type="EMBL" id="CP000804">
    <property type="protein sequence ID" value="ABU60030.1"/>
    <property type="molecule type" value="Genomic_DNA"/>
</dbReference>
<dbReference type="RefSeq" id="WP_012122453.1">
    <property type="nucleotide sequence ID" value="NC_009767.1"/>
</dbReference>
<dbReference type="SMR" id="A7NR34"/>
<dbReference type="STRING" id="383372.Rcas_3997"/>
<dbReference type="KEGG" id="rca:Rcas_3997"/>
<dbReference type="eggNOG" id="COG0101">
    <property type="taxonomic scope" value="Bacteria"/>
</dbReference>
<dbReference type="HOGENOM" id="CLU_014673_0_1_0"/>
<dbReference type="OrthoDB" id="9811823at2"/>
<dbReference type="Proteomes" id="UP000000263">
    <property type="component" value="Chromosome"/>
</dbReference>
<dbReference type="GO" id="GO:0003723">
    <property type="term" value="F:RNA binding"/>
    <property type="evidence" value="ECO:0007669"/>
    <property type="project" value="InterPro"/>
</dbReference>
<dbReference type="GO" id="GO:0160147">
    <property type="term" value="F:tRNA pseudouridine(38-40) synthase activity"/>
    <property type="evidence" value="ECO:0007669"/>
    <property type="project" value="UniProtKB-EC"/>
</dbReference>
<dbReference type="GO" id="GO:0031119">
    <property type="term" value="P:tRNA pseudouridine synthesis"/>
    <property type="evidence" value="ECO:0007669"/>
    <property type="project" value="UniProtKB-UniRule"/>
</dbReference>
<dbReference type="CDD" id="cd02570">
    <property type="entry name" value="PseudoU_synth_EcTruA"/>
    <property type="match status" value="1"/>
</dbReference>
<dbReference type="FunFam" id="3.30.70.580:FF:000001">
    <property type="entry name" value="tRNA pseudouridine synthase A"/>
    <property type="match status" value="1"/>
</dbReference>
<dbReference type="Gene3D" id="3.30.70.660">
    <property type="entry name" value="Pseudouridine synthase I, catalytic domain, C-terminal subdomain"/>
    <property type="match status" value="1"/>
</dbReference>
<dbReference type="Gene3D" id="3.30.70.580">
    <property type="entry name" value="Pseudouridine synthase I, catalytic domain, N-terminal subdomain"/>
    <property type="match status" value="1"/>
</dbReference>
<dbReference type="HAMAP" id="MF_00171">
    <property type="entry name" value="TruA"/>
    <property type="match status" value="1"/>
</dbReference>
<dbReference type="InterPro" id="IPR020103">
    <property type="entry name" value="PsdUridine_synth_cat_dom_sf"/>
</dbReference>
<dbReference type="InterPro" id="IPR001406">
    <property type="entry name" value="PsdUridine_synth_TruA"/>
</dbReference>
<dbReference type="InterPro" id="IPR020097">
    <property type="entry name" value="PsdUridine_synth_TruA_a/b_dom"/>
</dbReference>
<dbReference type="InterPro" id="IPR020095">
    <property type="entry name" value="PsdUridine_synth_TruA_C"/>
</dbReference>
<dbReference type="InterPro" id="IPR020094">
    <property type="entry name" value="TruA/RsuA/RluB/E/F_N"/>
</dbReference>
<dbReference type="NCBIfam" id="TIGR00071">
    <property type="entry name" value="hisT_truA"/>
    <property type="match status" value="1"/>
</dbReference>
<dbReference type="PANTHER" id="PTHR11142">
    <property type="entry name" value="PSEUDOURIDYLATE SYNTHASE"/>
    <property type="match status" value="1"/>
</dbReference>
<dbReference type="PANTHER" id="PTHR11142:SF0">
    <property type="entry name" value="TRNA PSEUDOURIDINE SYNTHASE-LIKE 1"/>
    <property type="match status" value="1"/>
</dbReference>
<dbReference type="Pfam" id="PF01416">
    <property type="entry name" value="PseudoU_synth_1"/>
    <property type="match status" value="2"/>
</dbReference>
<dbReference type="PIRSF" id="PIRSF001430">
    <property type="entry name" value="tRNA_psdUrid_synth"/>
    <property type="match status" value="1"/>
</dbReference>
<dbReference type="SUPFAM" id="SSF55120">
    <property type="entry name" value="Pseudouridine synthase"/>
    <property type="match status" value="1"/>
</dbReference>
<proteinExistence type="inferred from homology"/>
<feature type="chain" id="PRO_1000077098" description="tRNA pseudouridine synthase A">
    <location>
        <begin position="1"/>
        <end position="270"/>
    </location>
</feature>
<feature type="active site" description="Nucleophile" evidence="1">
    <location>
        <position position="52"/>
    </location>
</feature>
<feature type="binding site" evidence="1">
    <location>
        <position position="110"/>
    </location>
    <ligand>
        <name>substrate</name>
    </ligand>
</feature>
<sequence>MRNIALRIEYDGTDFVGSQWQTNGRSVQGALEAAWQQLTGERRRMILAGRTDAGVHARGQVANVSTNTRHSLATIIRGLNGVLPEDIGILAAWEVPEEFHARYSAVRREYRYVIDNGRTPSPLLRRHAAYVPRRLDVAAMDRAIQQVIGTHDFAPLSDGPQEGSTVRICYDARCTCTEVWGQPLVLIDVAANAFLRHMVRNLVGTLIQVGEGRIDADGFAAVLAGANRRARVLAPAHGLYLMAVRYPEDGNAAADTLVAAVGVTETRMQL</sequence>
<organism>
    <name type="scientific">Roseiflexus castenholzii (strain DSM 13941 / HLO8)</name>
    <dbReference type="NCBI Taxonomy" id="383372"/>
    <lineage>
        <taxon>Bacteria</taxon>
        <taxon>Bacillati</taxon>
        <taxon>Chloroflexota</taxon>
        <taxon>Chloroflexia</taxon>
        <taxon>Chloroflexales</taxon>
        <taxon>Roseiflexineae</taxon>
        <taxon>Roseiflexaceae</taxon>
        <taxon>Roseiflexus</taxon>
    </lineage>
</organism>